<comment type="function">
    <text evidence="1">One of several proteins that assist in the late maturation steps of the functional core of the 30S ribosomal subunit. Associates with free 30S ribosomal subunits (but not with 30S subunits that are part of 70S ribosomes or polysomes). Required for efficient processing of 16S rRNA. May interact with the 5'-terminal helix region of 16S rRNA.</text>
</comment>
<comment type="subunit">
    <text evidence="1">Monomer. Binds 30S ribosomal subunits, but not 50S ribosomal subunits or 70S ribosomes.</text>
</comment>
<comment type="subcellular location">
    <subcellularLocation>
        <location evidence="1">Cytoplasm</location>
    </subcellularLocation>
</comment>
<comment type="similarity">
    <text evidence="1">Belongs to the RbfA family.</text>
</comment>
<sequence>MKHRKGRVEGEILRELTKIIRKNIRDPRVSNVTFTAVECSNDFSYATVYYSLLTEDEQAQKEAEAGLEKAKGTMRHLLGQSLTMYKVPELIFKRDQSVIYGSKIDRLLADLKKQEQDRQN</sequence>
<reference key="1">
    <citation type="journal article" date="2006" name="Proc. Natl. Acad. Sci. U.S.A.">
        <title>The complete genome sequence of Lactobacillus bulgaricus reveals extensive and ongoing reductive evolution.</title>
        <authorList>
            <person name="van de Guchte M."/>
            <person name="Penaud S."/>
            <person name="Grimaldi C."/>
            <person name="Barbe V."/>
            <person name="Bryson K."/>
            <person name="Nicolas P."/>
            <person name="Robert C."/>
            <person name="Oztas S."/>
            <person name="Mangenot S."/>
            <person name="Couloux A."/>
            <person name="Loux V."/>
            <person name="Dervyn R."/>
            <person name="Bossy R."/>
            <person name="Bolotin A."/>
            <person name="Batto J.-M."/>
            <person name="Walunas T."/>
            <person name="Gibrat J.-F."/>
            <person name="Bessieres P."/>
            <person name="Weissenbach J."/>
            <person name="Ehrlich S.D."/>
            <person name="Maguin E."/>
        </authorList>
    </citation>
    <scope>NUCLEOTIDE SEQUENCE [LARGE SCALE GENOMIC DNA]</scope>
    <source>
        <strain>ATCC 11842 / DSM 20081 / BCRC 10696 / JCM 1002 / NBRC 13953 / NCIMB 11778 / NCTC 12712 / WDCM 00102 / Lb 14</strain>
    </source>
</reference>
<organism>
    <name type="scientific">Lactobacillus delbrueckii subsp. bulgaricus (strain ATCC 11842 / DSM 20081 / BCRC 10696 / JCM 1002 / NBRC 13953 / NCIMB 11778 / NCTC 12712 / WDCM 00102 / Lb 14)</name>
    <dbReference type="NCBI Taxonomy" id="390333"/>
    <lineage>
        <taxon>Bacteria</taxon>
        <taxon>Bacillati</taxon>
        <taxon>Bacillota</taxon>
        <taxon>Bacilli</taxon>
        <taxon>Lactobacillales</taxon>
        <taxon>Lactobacillaceae</taxon>
        <taxon>Lactobacillus</taxon>
    </lineage>
</organism>
<accession>Q1G9Q0</accession>
<feature type="chain" id="PRO_1000000125" description="Ribosome-binding factor A">
    <location>
        <begin position="1"/>
        <end position="120"/>
    </location>
</feature>
<keyword id="KW-0963">Cytoplasm</keyword>
<keyword id="KW-1185">Reference proteome</keyword>
<keyword id="KW-0690">Ribosome biogenesis</keyword>
<name>RBFA_LACDA</name>
<proteinExistence type="inferred from homology"/>
<evidence type="ECO:0000255" key="1">
    <source>
        <dbReference type="HAMAP-Rule" id="MF_00003"/>
    </source>
</evidence>
<gene>
    <name evidence="1" type="primary">rbfA</name>
    <name type="ordered locus">Ldb1331</name>
</gene>
<protein>
    <recommendedName>
        <fullName evidence="1">Ribosome-binding factor A</fullName>
    </recommendedName>
</protein>
<dbReference type="EMBL" id="CR954253">
    <property type="protein sequence ID" value="CAI98132.1"/>
    <property type="molecule type" value="Genomic_DNA"/>
</dbReference>
<dbReference type="RefSeq" id="WP_002876717.1">
    <property type="nucleotide sequence ID" value="NZ_JQAV01000006.1"/>
</dbReference>
<dbReference type="SMR" id="Q1G9Q0"/>
<dbReference type="STRING" id="390333.Ldb1331"/>
<dbReference type="KEGG" id="ldb:Ldb1331"/>
<dbReference type="PATRIC" id="fig|390333.13.peg.1698"/>
<dbReference type="eggNOG" id="COG0858">
    <property type="taxonomic scope" value="Bacteria"/>
</dbReference>
<dbReference type="HOGENOM" id="CLU_089475_3_0_9"/>
<dbReference type="BioCyc" id="LDEL390333:LDB_RS05690-MONOMER"/>
<dbReference type="Proteomes" id="UP000001259">
    <property type="component" value="Chromosome"/>
</dbReference>
<dbReference type="GO" id="GO:0005829">
    <property type="term" value="C:cytosol"/>
    <property type="evidence" value="ECO:0007669"/>
    <property type="project" value="TreeGrafter"/>
</dbReference>
<dbReference type="GO" id="GO:0043024">
    <property type="term" value="F:ribosomal small subunit binding"/>
    <property type="evidence" value="ECO:0007669"/>
    <property type="project" value="TreeGrafter"/>
</dbReference>
<dbReference type="GO" id="GO:0030490">
    <property type="term" value="P:maturation of SSU-rRNA"/>
    <property type="evidence" value="ECO:0007669"/>
    <property type="project" value="UniProtKB-UniRule"/>
</dbReference>
<dbReference type="Gene3D" id="3.30.300.20">
    <property type="match status" value="1"/>
</dbReference>
<dbReference type="HAMAP" id="MF_00003">
    <property type="entry name" value="RbfA"/>
    <property type="match status" value="1"/>
</dbReference>
<dbReference type="InterPro" id="IPR015946">
    <property type="entry name" value="KH_dom-like_a/b"/>
</dbReference>
<dbReference type="InterPro" id="IPR000238">
    <property type="entry name" value="RbfA"/>
</dbReference>
<dbReference type="InterPro" id="IPR023799">
    <property type="entry name" value="RbfA_dom_sf"/>
</dbReference>
<dbReference type="InterPro" id="IPR020053">
    <property type="entry name" value="Ribosome-bd_factorA_CS"/>
</dbReference>
<dbReference type="NCBIfam" id="NF010391">
    <property type="entry name" value="PRK13818.1"/>
    <property type="match status" value="1"/>
</dbReference>
<dbReference type="NCBIfam" id="TIGR00082">
    <property type="entry name" value="rbfA"/>
    <property type="match status" value="1"/>
</dbReference>
<dbReference type="PANTHER" id="PTHR33515">
    <property type="entry name" value="RIBOSOME-BINDING FACTOR A, CHLOROPLASTIC-RELATED"/>
    <property type="match status" value="1"/>
</dbReference>
<dbReference type="PANTHER" id="PTHR33515:SF1">
    <property type="entry name" value="RIBOSOME-BINDING FACTOR A, CHLOROPLASTIC-RELATED"/>
    <property type="match status" value="1"/>
</dbReference>
<dbReference type="Pfam" id="PF02033">
    <property type="entry name" value="RBFA"/>
    <property type="match status" value="1"/>
</dbReference>
<dbReference type="SUPFAM" id="SSF89919">
    <property type="entry name" value="Ribosome-binding factor A, RbfA"/>
    <property type="match status" value="1"/>
</dbReference>
<dbReference type="PROSITE" id="PS01319">
    <property type="entry name" value="RBFA"/>
    <property type="match status" value="1"/>
</dbReference>